<comment type="function">
    <text evidence="1">Involved in spore and ascus formation. Required for the efficient assembly of the precursors of the prospore membrane to a continuous prospore membrane (By similarity).</text>
</comment>
<comment type="subcellular location">
    <subcellularLocation>
        <location evidence="1">Prospore membrane</location>
        <topology evidence="1">Multi-pass membrane protein</topology>
    </subcellularLocation>
</comment>
<comment type="similarity">
    <text evidence="3">Belongs to the SMA2 family.</text>
</comment>
<gene>
    <name type="primary">SMA2</name>
    <name type="ordered locus">AER135W</name>
</gene>
<evidence type="ECO:0000250" key="1"/>
<evidence type="ECO:0000255" key="2"/>
<evidence type="ECO:0000305" key="3"/>
<protein>
    <recommendedName>
        <fullName>Spore membrane assembly protein 2</fullName>
    </recommendedName>
</protein>
<proteinExistence type="inferred from homology"/>
<keyword id="KW-0472">Membrane</keyword>
<keyword id="KW-1185">Reference proteome</keyword>
<keyword id="KW-0749">Sporulation</keyword>
<keyword id="KW-0812">Transmembrane</keyword>
<keyword id="KW-1133">Transmembrane helix</keyword>
<name>SMA2_EREGS</name>
<dbReference type="EMBL" id="AE016818">
    <property type="protein sequence ID" value="AAS52818.1"/>
    <property type="molecule type" value="Genomic_DNA"/>
</dbReference>
<dbReference type="RefSeq" id="NP_984994.1">
    <property type="nucleotide sequence ID" value="NM_210348.1"/>
</dbReference>
<dbReference type="EnsemblFungi" id="AAS52818">
    <property type="protein sequence ID" value="AAS52818"/>
    <property type="gene ID" value="AGOS_AER135W"/>
</dbReference>
<dbReference type="GeneID" id="4621200"/>
<dbReference type="KEGG" id="ago:AGOS_AER135W"/>
<dbReference type="eggNOG" id="ENOG502QW7F">
    <property type="taxonomic scope" value="Eukaryota"/>
</dbReference>
<dbReference type="HOGENOM" id="CLU_776604_0_0_1"/>
<dbReference type="InParanoid" id="Q756X9"/>
<dbReference type="OMA" id="DLPICTP"/>
<dbReference type="OrthoDB" id="4073891at2759"/>
<dbReference type="Proteomes" id="UP000000591">
    <property type="component" value="Chromosome V"/>
</dbReference>
<dbReference type="GO" id="GO:0005628">
    <property type="term" value="C:prospore membrane"/>
    <property type="evidence" value="ECO:0007669"/>
    <property type="project" value="UniProtKB-SubCell"/>
</dbReference>
<dbReference type="GO" id="GO:0030435">
    <property type="term" value="P:sporulation resulting in formation of a cellular spore"/>
    <property type="evidence" value="ECO:0007669"/>
    <property type="project" value="UniProtKB-KW"/>
</dbReference>
<organism>
    <name type="scientific">Eremothecium gossypii (strain ATCC 10895 / CBS 109.51 / FGSC 9923 / NRRL Y-1056)</name>
    <name type="common">Yeast</name>
    <name type="synonym">Ashbya gossypii</name>
    <dbReference type="NCBI Taxonomy" id="284811"/>
    <lineage>
        <taxon>Eukaryota</taxon>
        <taxon>Fungi</taxon>
        <taxon>Dikarya</taxon>
        <taxon>Ascomycota</taxon>
        <taxon>Saccharomycotina</taxon>
        <taxon>Saccharomycetes</taxon>
        <taxon>Saccharomycetales</taxon>
        <taxon>Saccharomycetaceae</taxon>
        <taxon>Eremothecium</taxon>
    </lineage>
</organism>
<accession>Q756X9</accession>
<reference key="1">
    <citation type="journal article" date="2004" name="Science">
        <title>The Ashbya gossypii genome as a tool for mapping the ancient Saccharomyces cerevisiae genome.</title>
        <authorList>
            <person name="Dietrich F.S."/>
            <person name="Voegeli S."/>
            <person name="Brachat S."/>
            <person name="Lerch A."/>
            <person name="Gates K."/>
            <person name="Steiner S."/>
            <person name="Mohr C."/>
            <person name="Poehlmann R."/>
            <person name="Luedi P."/>
            <person name="Choi S."/>
            <person name="Wing R.A."/>
            <person name="Flavier A."/>
            <person name="Gaffney T.D."/>
            <person name="Philippsen P."/>
        </authorList>
    </citation>
    <scope>NUCLEOTIDE SEQUENCE [LARGE SCALE GENOMIC DNA]</scope>
    <source>
        <strain>ATCC 10895 / CBS 109.51 / FGSC 9923 / NRRL Y-1056</strain>
    </source>
</reference>
<reference key="2">
    <citation type="journal article" date="2013" name="G3 (Bethesda)">
        <title>Genomes of Ashbya fungi isolated from insects reveal four mating-type loci, numerous translocations, lack of transposons, and distinct gene duplications.</title>
        <authorList>
            <person name="Dietrich F.S."/>
            <person name="Voegeli S."/>
            <person name="Kuo S."/>
            <person name="Philippsen P."/>
        </authorList>
    </citation>
    <scope>GENOME REANNOTATION</scope>
    <source>
        <strain>ATCC 10895 / CBS 109.51 / FGSC 9923 / NRRL Y-1056</strain>
    </source>
</reference>
<feature type="chain" id="PRO_0000324500" description="Spore membrane assembly protein 2">
    <location>
        <begin position="1"/>
        <end position="385"/>
    </location>
</feature>
<feature type="topological domain" description="Cytoplasmic" evidence="2">
    <location>
        <begin position="1"/>
        <end position="13"/>
    </location>
</feature>
<feature type="transmembrane region" description="Helical" evidence="2">
    <location>
        <begin position="14"/>
        <end position="34"/>
    </location>
</feature>
<feature type="topological domain" description="Lumenal" evidence="2">
    <location>
        <begin position="35"/>
        <end position="231"/>
    </location>
</feature>
<feature type="transmembrane region" description="Helical" evidence="2">
    <location>
        <begin position="232"/>
        <end position="252"/>
    </location>
</feature>
<feature type="topological domain" description="Cytoplasmic" evidence="2">
    <location>
        <begin position="253"/>
        <end position="280"/>
    </location>
</feature>
<feature type="transmembrane region" description="Helical" evidence="2">
    <location>
        <begin position="281"/>
        <end position="301"/>
    </location>
</feature>
<feature type="topological domain" description="Lumenal" evidence="2">
    <location>
        <begin position="302"/>
        <end position="322"/>
    </location>
</feature>
<feature type="transmembrane region" description="Helical" evidence="2">
    <location>
        <begin position="323"/>
        <end position="343"/>
    </location>
</feature>
<feature type="topological domain" description="Cytoplasmic" evidence="2">
    <location>
        <begin position="344"/>
        <end position="385"/>
    </location>
</feature>
<sequence>MGSRLLQFQSYGKWFMLLSLATAICLLHLPSYSCTYSRDLPICTPQVSFQLTNTTPTATLFLSTVKEVSMLLSYVAIDLGWNVNFPKPNDYDTSNLVNTFDPSNKYHVNLFGYCKWQPLSNKATWYCMDNPNGLDIISMIVRDLGAQLGVLSHTNTKILSDSLWILYRSIFDSFYKFVHDDDYRADKVASFLQSLQQGGPLPSVDQFKTVTLLLKCFEKLTNAIQVTELCSFALIIIAIALATVACVMDILAAREEKHSATSDKLPKALFFKQITLKLSYAVVTCSLFYQIGMAVYFLALFSIRYPYDYKVKVMTFNPDTGYWLSVLRFVMEFWFAVACYIGLSLSRRRPSKEVDDLDWKDEEQTPDSGETAICVSTRGSTRIQV</sequence>